<feature type="chain" id="PRO_1000076245" description="ATP phosphoribosyltransferase regulatory subunit">
    <location>
        <begin position="1"/>
        <end position="412"/>
    </location>
</feature>
<reference key="1">
    <citation type="submission" date="2007-05" db="EMBL/GenBank/DDBJ databases">
        <title>Complete sequence of Dehalococcoides sp. BAV1.</title>
        <authorList>
            <consortium name="US DOE Joint Genome Institute"/>
            <person name="Copeland A."/>
            <person name="Lucas S."/>
            <person name="Lapidus A."/>
            <person name="Barry K."/>
            <person name="Detter J.C."/>
            <person name="Glavina del Rio T."/>
            <person name="Hammon N."/>
            <person name="Israni S."/>
            <person name="Pitluck S."/>
            <person name="Lowry S."/>
            <person name="Clum A."/>
            <person name="Schmutz J."/>
            <person name="Larimer F."/>
            <person name="Land M."/>
            <person name="Hauser L."/>
            <person name="Kyrpides N."/>
            <person name="Kim E."/>
            <person name="Ritalahti K.M."/>
            <person name="Loeffler F."/>
            <person name="Richardson P."/>
        </authorList>
    </citation>
    <scope>NUCLEOTIDE SEQUENCE [LARGE SCALE GENOMIC DNA]</scope>
    <source>
        <strain>ATCC BAA-2100 / JCM 16839 / KCTC 5957 / BAV1</strain>
    </source>
</reference>
<evidence type="ECO:0000255" key="1">
    <source>
        <dbReference type="HAMAP-Rule" id="MF_00125"/>
    </source>
</evidence>
<keyword id="KW-0028">Amino-acid biosynthesis</keyword>
<keyword id="KW-0963">Cytoplasm</keyword>
<keyword id="KW-0368">Histidine biosynthesis</keyword>
<sequence length="412" mass="46164">MIARCKGCSDLLPEDMLRFRYIESIFHDSCITWGYEEVRTPMLEYLSLFTSSGTLTPQMLKRVYSFLDWDGWSGERVVLRPDGTIPAARLYIDSLQEMDVARLCYTSNIFRFDETGKKSRENWQLGAELIGVTSPEANAELITLALETLARLGFEDVELRLSHAQLIKAVLAQLEPNADEQHKIFDQLLDGDIALMSRLETEKPELFRTLKLLMENKGTSASFLKNVMAMAGTAGGELEEPLNDFIAGVDVLDKLGVSYQIDLASGKGFEYYTGVIFHLFVNGEHVGGGGRYDKLIPLLGGPDKPAAGFALYLNRLIPMIDAEDMYDMVEEKILIKYQGDNLKTAYEIANLIRECGISAELFYPGVDTAAYGWAVTVKAEDCYEVTDLIEDKTLELKEQSEVIYLLNGEEDA</sequence>
<proteinExistence type="inferred from homology"/>
<organism>
    <name type="scientific">Dehalococcoides mccartyi (strain ATCC BAA-2100 / JCM 16839 / KCTC 5957 / BAV1)</name>
    <dbReference type="NCBI Taxonomy" id="216389"/>
    <lineage>
        <taxon>Bacteria</taxon>
        <taxon>Bacillati</taxon>
        <taxon>Chloroflexota</taxon>
        <taxon>Dehalococcoidia</taxon>
        <taxon>Dehalococcoidales</taxon>
        <taxon>Dehalococcoidaceae</taxon>
        <taxon>Dehalococcoides</taxon>
    </lineage>
</organism>
<dbReference type="EMBL" id="CP000688">
    <property type="protein sequence ID" value="ABQ17348.1"/>
    <property type="molecule type" value="Genomic_DNA"/>
</dbReference>
<dbReference type="SMR" id="A5FR32"/>
<dbReference type="KEGG" id="deb:DehaBAV1_0765"/>
<dbReference type="PATRIC" id="fig|216389.18.peg.814"/>
<dbReference type="HOGENOM" id="CLU_025113_3_0_0"/>
<dbReference type="UniPathway" id="UPA00031">
    <property type="reaction ID" value="UER00006"/>
</dbReference>
<dbReference type="GO" id="GO:0005737">
    <property type="term" value="C:cytoplasm"/>
    <property type="evidence" value="ECO:0007669"/>
    <property type="project" value="UniProtKB-SubCell"/>
</dbReference>
<dbReference type="GO" id="GO:0004821">
    <property type="term" value="F:histidine-tRNA ligase activity"/>
    <property type="evidence" value="ECO:0007669"/>
    <property type="project" value="TreeGrafter"/>
</dbReference>
<dbReference type="GO" id="GO:0006427">
    <property type="term" value="P:histidyl-tRNA aminoacylation"/>
    <property type="evidence" value="ECO:0007669"/>
    <property type="project" value="TreeGrafter"/>
</dbReference>
<dbReference type="GO" id="GO:0000105">
    <property type="term" value="P:L-histidine biosynthetic process"/>
    <property type="evidence" value="ECO:0007669"/>
    <property type="project" value="UniProtKB-UniRule"/>
</dbReference>
<dbReference type="CDD" id="cd00773">
    <property type="entry name" value="HisRS-like_core"/>
    <property type="match status" value="1"/>
</dbReference>
<dbReference type="Gene3D" id="3.30.930.10">
    <property type="entry name" value="Bira Bifunctional Protein, Domain 2"/>
    <property type="match status" value="1"/>
</dbReference>
<dbReference type="HAMAP" id="MF_00125">
    <property type="entry name" value="HisZ"/>
    <property type="match status" value="1"/>
</dbReference>
<dbReference type="InterPro" id="IPR006195">
    <property type="entry name" value="aa-tRNA-synth_II"/>
</dbReference>
<dbReference type="InterPro" id="IPR045864">
    <property type="entry name" value="aa-tRNA-synth_II/BPL/LPL"/>
</dbReference>
<dbReference type="InterPro" id="IPR041715">
    <property type="entry name" value="HisRS-like_core"/>
</dbReference>
<dbReference type="InterPro" id="IPR004516">
    <property type="entry name" value="HisRS/HisZ"/>
</dbReference>
<dbReference type="InterPro" id="IPR004517">
    <property type="entry name" value="HisZ"/>
</dbReference>
<dbReference type="PANTHER" id="PTHR43707:SF1">
    <property type="entry name" value="HISTIDINE--TRNA LIGASE, MITOCHONDRIAL-RELATED"/>
    <property type="match status" value="1"/>
</dbReference>
<dbReference type="PANTHER" id="PTHR43707">
    <property type="entry name" value="HISTIDYL-TRNA SYNTHETASE"/>
    <property type="match status" value="1"/>
</dbReference>
<dbReference type="Pfam" id="PF13393">
    <property type="entry name" value="tRNA-synt_His"/>
    <property type="match status" value="1"/>
</dbReference>
<dbReference type="PIRSF" id="PIRSF001549">
    <property type="entry name" value="His-tRNA_synth"/>
    <property type="match status" value="1"/>
</dbReference>
<dbReference type="SUPFAM" id="SSF55681">
    <property type="entry name" value="Class II aaRS and biotin synthetases"/>
    <property type="match status" value="1"/>
</dbReference>
<dbReference type="PROSITE" id="PS50862">
    <property type="entry name" value="AA_TRNA_LIGASE_II"/>
    <property type="match status" value="1"/>
</dbReference>
<gene>
    <name evidence="1" type="primary">hisZ</name>
    <name type="ordered locus">DehaBAV1_0765</name>
</gene>
<protein>
    <recommendedName>
        <fullName evidence="1">ATP phosphoribosyltransferase regulatory subunit</fullName>
    </recommendedName>
</protein>
<accession>A5FR32</accession>
<comment type="function">
    <text evidence="1">Required for the first step of histidine biosynthesis. May allow the feedback regulation of ATP phosphoribosyltransferase activity by histidine.</text>
</comment>
<comment type="pathway">
    <text evidence="1">Amino-acid biosynthesis; L-histidine biosynthesis; L-histidine from 5-phospho-alpha-D-ribose 1-diphosphate: step 1/9.</text>
</comment>
<comment type="subunit">
    <text evidence="1">Heteromultimer composed of HisG and HisZ subunits.</text>
</comment>
<comment type="subcellular location">
    <subcellularLocation>
        <location evidence="1">Cytoplasm</location>
    </subcellularLocation>
</comment>
<comment type="miscellaneous">
    <text>This function is generally fulfilled by the C-terminal part of HisG, which is missing in some bacteria such as this one.</text>
</comment>
<comment type="similarity">
    <text evidence="1">Belongs to the class-II aminoacyl-tRNA synthetase family. HisZ subfamily.</text>
</comment>
<name>HISZ_DEHMB</name>